<keyword id="KW-0028">Amino-acid biosynthesis</keyword>
<keyword id="KW-0057">Aromatic amino acid biosynthesis</keyword>
<keyword id="KW-0328">Glycosyltransferase</keyword>
<keyword id="KW-0460">Magnesium</keyword>
<keyword id="KW-0479">Metal-binding</keyword>
<keyword id="KW-1185">Reference proteome</keyword>
<keyword id="KW-0808">Transferase</keyword>
<keyword id="KW-0822">Tryptophan biosynthesis</keyword>
<feature type="chain" id="PRO_0000154508" description="Anthranilate phosphoribosyltransferase">
    <location>
        <begin position="1"/>
        <end position="345"/>
    </location>
</feature>
<feature type="binding site" evidence="1">
    <location>
        <position position="87"/>
    </location>
    <ligand>
        <name>5-phospho-alpha-D-ribose 1-diphosphate</name>
        <dbReference type="ChEBI" id="CHEBI:58017"/>
    </ligand>
</feature>
<feature type="binding site" evidence="1">
    <location>
        <position position="87"/>
    </location>
    <ligand>
        <name>anthranilate</name>
        <dbReference type="ChEBI" id="CHEBI:16567"/>
        <label>1</label>
    </ligand>
</feature>
<feature type="binding site" evidence="1">
    <location>
        <begin position="90"/>
        <end position="91"/>
    </location>
    <ligand>
        <name>5-phospho-alpha-D-ribose 1-diphosphate</name>
        <dbReference type="ChEBI" id="CHEBI:58017"/>
    </ligand>
</feature>
<feature type="binding site" evidence="1">
    <location>
        <position position="95"/>
    </location>
    <ligand>
        <name>5-phospho-alpha-D-ribose 1-diphosphate</name>
        <dbReference type="ChEBI" id="CHEBI:58017"/>
    </ligand>
</feature>
<feature type="binding site" evidence="1">
    <location>
        <begin position="97"/>
        <end position="100"/>
    </location>
    <ligand>
        <name>5-phospho-alpha-D-ribose 1-diphosphate</name>
        <dbReference type="ChEBI" id="CHEBI:58017"/>
    </ligand>
</feature>
<feature type="binding site" evidence="1">
    <location>
        <position position="99"/>
    </location>
    <ligand>
        <name>Mg(2+)</name>
        <dbReference type="ChEBI" id="CHEBI:18420"/>
        <label>1</label>
    </ligand>
</feature>
<feature type="binding site" evidence="1">
    <location>
        <begin position="115"/>
        <end position="123"/>
    </location>
    <ligand>
        <name>5-phospho-alpha-D-ribose 1-diphosphate</name>
        <dbReference type="ChEBI" id="CHEBI:58017"/>
    </ligand>
</feature>
<feature type="binding site" evidence="1">
    <location>
        <position position="118"/>
    </location>
    <ligand>
        <name>anthranilate</name>
        <dbReference type="ChEBI" id="CHEBI:16567"/>
        <label>1</label>
    </ligand>
</feature>
<feature type="binding site" evidence="1">
    <location>
        <position position="127"/>
    </location>
    <ligand>
        <name>5-phospho-alpha-D-ribose 1-diphosphate</name>
        <dbReference type="ChEBI" id="CHEBI:58017"/>
    </ligand>
</feature>
<feature type="binding site" evidence="1">
    <location>
        <position position="173"/>
    </location>
    <ligand>
        <name>anthranilate</name>
        <dbReference type="ChEBI" id="CHEBI:16567"/>
        <label>2</label>
    </ligand>
</feature>
<feature type="binding site" evidence="1">
    <location>
        <position position="232"/>
    </location>
    <ligand>
        <name>Mg(2+)</name>
        <dbReference type="ChEBI" id="CHEBI:18420"/>
        <label>2</label>
    </ligand>
</feature>
<feature type="binding site" evidence="1">
    <location>
        <position position="233"/>
    </location>
    <ligand>
        <name>Mg(2+)</name>
        <dbReference type="ChEBI" id="CHEBI:18420"/>
        <label>1</label>
    </ligand>
</feature>
<feature type="binding site" evidence="1">
    <location>
        <position position="233"/>
    </location>
    <ligand>
        <name>Mg(2+)</name>
        <dbReference type="ChEBI" id="CHEBI:18420"/>
        <label>2</label>
    </ligand>
</feature>
<organism>
    <name type="scientific">Aeropyrum pernix (strain ATCC 700893 / DSM 11879 / JCM 9820 / NBRC 100138 / K1)</name>
    <dbReference type="NCBI Taxonomy" id="272557"/>
    <lineage>
        <taxon>Archaea</taxon>
        <taxon>Thermoproteota</taxon>
        <taxon>Thermoprotei</taxon>
        <taxon>Desulfurococcales</taxon>
        <taxon>Desulfurococcaceae</taxon>
        <taxon>Aeropyrum</taxon>
    </lineage>
</organism>
<comment type="function">
    <text evidence="1">Catalyzes the transfer of the phosphoribosyl group of 5-phosphorylribose-1-pyrophosphate (PRPP) to anthranilate to yield N-(5'-phosphoribosyl)-anthranilate (PRA).</text>
</comment>
<comment type="catalytic activity">
    <reaction evidence="1">
        <text>N-(5-phospho-beta-D-ribosyl)anthranilate + diphosphate = 5-phospho-alpha-D-ribose 1-diphosphate + anthranilate</text>
        <dbReference type="Rhea" id="RHEA:11768"/>
        <dbReference type="ChEBI" id="CHEBI:16567"/>
        <dbReference type="ChEBI" id="CHEBI:18277"/>
        <dbReference type="ChEBI" id="CHEBI:33019"/>
        <dbReference type="ChEBI" id="CHEBI:58017"/>
        <dbReference type="EC" id="2.4.2.18"/>
    </reaction>
</comment>
<comment type="cofactor">
    <cofactor evidence="1">
        <name>Mg(2+)</name>
        <dbReference type="ChEBI" id="CHEBI:18420"/>
    </cofactor>
    <text evidence="1">Binds 2 magnesium ions per monomer.</text>
</comment>
<comment type="pathway">
    <text evidence="1">Amino-acid biosynthesis; L-tryptophan biosynthesis; L-tryptophan from chorismate: step 2/5.</text>
</comment>
<comment type="subunit">
    <text evidence="1">Homodimer.</text>
</comment>
<comment type="similarity">
    <text evidence="1">Belongs to the anthranilate phosphoribosyltransferase family.</text>
</comment>
<dbReference type="EC" id="2.4.2.18" evidence="1"/>
<dbReference type="EMBL" id="BA000002">
    <property type="protein sequence ID" value="BAA81568.1"/>
    <property type="molecule type" value="Genomic_DNA"/>
</dbReference>
<dbReference type="PIR" id="H72488">
    <property type="entry name" value="H72488"/>
</dbReference>
<dbReference type="RefSeq" id="WP_010867080.1">
    <property type="nucleotide sequence ID" value="NC_000854.2"/>
</dbReference>
<dbReference type="SMR" id="Q9Y8T2"/>
<dbReference type="STRING" id="272557.APE_2551"/>
<dbReference type="EnsemblBacteria" id="BAA81568">
    <property type="protein sequence ID" value="BAA81568"/>
    <property type="gene ID" value="APE_2551"/>
</dbReference>
<dbReference type="GeneID" id="1445496"/>
<dbReference type="KEGG" id="ape:APE_2551"/>
<dbReference type="PATRIC" id="fig|272557.25.peg.1694"/>
<dbReference type="eggNOG" id="arCOG02012">
    <property type="taxonomic scope" value="Archaea"/>
</dbReference>
<dbReference type="UniPathway" id="UPA00035">
    <property type="reaction ID" value="UER00041"/>
</dbReference>
<dbReference type="Proteomes" id="UP000002518">
    <property type="component" value="Chromosome"/>
</dbReference>
<dbReference type="GO" id="GO:0005829">
    <property type="term" value="C:cytosol"/>
    <property type="evidence" value="ECO:0007669"/>
    <property type="project" value="TreeGrafter"/>
</dbReference>
<dbReference type="GO" id="GO:0004048">
    <property type="term" value="F:anthranilate phosphoribosyltransferase activity"/>
    <property type="evidence" value="ECO:0007669"/>
    <property type="project" value="UniProtKB-UniRule"/>
</dbReference>
<dbReference type="GO" id="GO:0000287">
    <property type="term" value="F:magnesium ion binding"/>
    <property type="evidence" value="ECO:0007669"/>
    <property type="project" value="UniProtKB-UniRule"/>
</dbReference>
<dbReference type="GO" id="GO:0000162">
    <property type="term" value="P:L-tryptophan biosynthetic process"/>
    <property type="evidence" value="ECO:0007669"/>
    <property type="project" value="UniProtKB-UniRule"/>
</dbReference>
<dbReference type="FunFam" id="3.40.1030.10:FF:000002">
    <property type="entry name" value="Anthranilate phosphoribosyltransferase"/>
    <property type="match status" value="1"/>
</dbReference>
<dbReference type="Gene3D" id="3.40.1030.10">
    <property type="entry name" value="Nucleoside phosphorylase/phosphoribosyltransferase catalytic domain"/>
    <property type="match status" value="1"/>
</dbReference>
<dbReference type="Gene3D" id="1.20.970.10">
    <property type="entry name" value="Transferase, Pyrimidine Nucleoside Phosphorylase, Chain C"/>
    <property type="match status" value="1"/>
</dbReference>
<dbReference type="HAMAP" id="MF_00211">
    <property type="entry name" value="TrpD"/>
    <property type="match status" value="1"/>
</dbReference>
<dbReference type="InterPro" id="IPR005940">
    <property type="entry name" value="Anthranilate_Pribosyl_Tfrase"/>
</dbReference>
<dbReference type="InterPro" id="IPR000312">
    <property type="entry name" value="Glycosyl_Trfase_fam3"/>
</dbReference>
<dbReference type="InterPro" id="IPR017459">
    <property type="entry name" value="Glycosyl_Trfase_fam3_N_dom"/>
</dbReference>
<dbReference type="InterPro" id="IPR036320">
    <property type="entry name" value="Glycosyl_Trfase_fam3_N_dom_sf"/>
</dbReference>
<dbReference type="InterPro" id="IPR035902">
    <property type="entry name" value="Nuc_phospho_transferase"/>
</dbReference>
<dbReference type="NCBIfam" id="TIGR01245">
    <property type="entry name" value="trpD"/>
    <property type="match status" value="1"/>
</dbReference>
<dbReference type="PANTHER" id="PTHR43285">
    <property type="entry name" value="ANTHRANILATE PHOSPHORIBOSYLTRANSFERASE"/>
    <property type="match status" value="1"/>
</dbReference>
<dbReference type="PANTHER" id="PTHR43285:SF2">
    <property type="entry name" value="ANTHRANILATE PHOSPHORIBOSYLTRANSFERASE"/>
    <property type="match status" value="1"/>
</dbReference>
<dbReference type="Pfam" id="PF02885">
    <property type="entry name" value="Glycos_trans_3N"/>
    <property type="match status" value="1"/>
</dbReference>
<dbReference type="Pfam" id="PF00591">
    <property type="entry name" value="Glycos_transf_3"/>
    <property type="match status" value="1"/>
</dbReference>
<dbReference type="SUPFAM" id="SSF52418">
    <property type="entry name" value="Nucleoside phosphorylase/phosphoribosyltransferase catalytic domain"/>
    <property type="match status" value="1"/>
</dbReference>
<dbReference type="SUPFAM" id="SSF47648">
    <property type="entry name" value="Nucleoside phosphorylase/phosphoribosyltransferase N-terminal domain"/>
    <property type="match status" value="1"/>
</dbReference>
<name>TRPD_AERPE</name>
<protein>
    <recommendedName>
        <fullName evidence="1">Anthranilate phosphoribosyltransferase</fullName>
        <ecNumber evidence="1">2.4.2.18</ecNumber>
    </recommendedName>
</protein>
<proteinExistence type="inferred from homology"/>
<gene>
    <name evidence="1" type="primary">trpD</name>
    <name type="ordered locus">APE_2551</name>
</gene>
<reference key="1">
    <citation type="journal article" date="1999" name="DNA Res.">
        <title>Complete genome sequence of an aerobic hyper-thermophilic crenarchaeon, Aeropyrum pernix K1.</title>
        <authorList>
            <person name="Kawarabayasi Y."/>
            <person name="Hino Y."/>
            <person name="Horikawa H."/>
            <person name="Yamazaki S."/>
            <person name="Haikawa Y."/>
            <person name="Jin-no K."/>
            <person name="Takahashi M."/>
            <person name="Sekine M."/>
            <person name="Baba S."/>
            <person name="Ankai A."/>
            <person name="Kosugi H."/>
            <person name="Hosoyama A."/>
            <person name="Fukui S."/>
            <person name="Nagai Y."/>
            <person name="Nishijima K."/>
            <person name="Nakazawa H."/>
            <person name="Takamiya M."/>
            <person name="Masuda S."/>
            <person name="Funahashi T."/>
            <person name="Tanaka T."/>
            <person name="Kudoh Y."/>
            <person name="Yamazaki J."/>
            <person name="Kushida N."/>
            <person name="Oguchi A."/>
            <person name="Aoki K."/>
            <person name="Kubota K."/>
            <person name="Nakamura Y."/>
            <person name="Nomura N."/>
            <person name="Sako Y."/>
            <person name="Kikuchi H."/>
        </authorList>
    </citation>
    <scope>NUCLEOTIDE SEQUENCE [LARGE SCALE GENOMIC DNA]</scope>
    <source>
        <strain>ATCC 700893 / DSM 11879 / JCM 9820 / NBRC 100138 / K1</strain>
    </source>
</reference>
<accession>Q9Y8T2</accession>
<sequence length="345" mass="36449">MVNSFEKSRFLLVKKLLEGEPLTPGEAAQLAQAMLDPSFDNSLKAAALAALRVRGEQPGEVVGFARALRDRAVRVEYGGEVLLDTAGTGGDGLSTLNASTAAALVAASLGVPTAKHGNRSFSSKSGSADVMEMLGYNINHRADRAVRMLSTLGFTFLYAPNYHPAMKAVVPVRRKLATRTIFNLVGPLANPAFNNVQVIGVARRSLMPVIASAASLLGYDAVLVVHGDPGMDEVSVTGETKILEVRRGRIEEYSITPEDLGLPITGLKELRVANAVESAERVRRALSGRGRRSDEAFIAANAAAALYVAGFEKDLKGAAEAAVQAIREGRPAALLEKAVKASLGM</sequence>
<evidence type="ECO:0000255" key="1">
    <source>
        <dbReference type="HAMAP-Rule" id="MF_00211"/>
    </source>
</evidence>